<comment type="function">
    <text evidence="1">Functions in the biosynthesis of branched-chain amino acids. Catalyzes the dehydration of (2R,3R)-2,3-dihydroxy-3-methylpentanoate (2,3-dihydroxy-3-methylvalerate) into 2-oxo-3-methylpentanoate (2-oxo-3-methylvalerate) and of (2R)-2,3-dihydroxy-3-methylbutanoate (2,3-dihydroxyisovalerate) into 2-oxo-3-methylbutanoate (2-oxoisovalerate), the penultimate precursor to L-isoleucine and L-valine, respectively.</text>
</comment>
<comment type="catalytic activity">
    <reaction evidence="1">
        <text>(2R)-2,3-dihydroxy-3-methylbutanoate = 3-methyl-2-oxobutanoate + H2O</text>
        <dbReference type="Rhea" id="RHEA:24809"/>
        <dbReference type="ChEBI" id="CHEBI:11851"/>
        <dbReference type="ChEBI" id="CHEBI:15377"/>
        <dbReference type="ChEBI" id="CHEBI:49072"/>
        <dbReference type="EC" id="4.2.1.9"/>
    </reaction>
    <physiologicalReaction direction="left-to-right" evidence="1">
        <dbReference type="Rhea" id="RHEA:24810"/>
    </physiologicalReaction>
</comment>
<comment type="catalytic activity">
    <reaction evidence="1">
        <text>(2R,3R)-2,3-dihydroxy-3-methylpentanoate = (S)-3-methyl-2-oxopentanoate + H2O</text>
        <dbReference type="Rhea" id="RHEA:27694"/>
        <dbReference type="ChEBI" id="CHEBI:15377"/>
        <dbReference type="ChEBI" id="CHEBI:35146"/>
        <dbReference type="ChEBI" id="CHEBI:49258"/>
        <dbReference type="EC" id="4.2.1.9"/>
    </reaction>
    <physiologicalReaction direction="left-to-right" evidence="1">
        <dbReference type="Rhea" id="RHEA:27695"/>
    </physiologicalReaction>
</comment>
<comment type="cofactor">
    <cofactor evidence="1">
        <name>[2Fe-2S] cluster</name>
        <dbReference type="ChEBI" id="CHEBI:190135"/>
    </cofactor>
    <text evidence="1">Binds 1 [2Fe-2S] cluster per subunit. This cluster acts as a Lewis acid cofactor.</text>
</comment>
<comment type="cofactor">
    <cofactor evidence="1">
        <name>Mg(2+)</name>
        <dbReference type="ChEBI" id="CHEBI:18420"/>
    </cofactor>
</comment>
<comment type="pathway">
    <text evidence="1">Amino-acid biosynthesis; L-isoleucine biosynthesis; L-isoleucine from 2-oxobutanoate: step 3/4.</text>
</comment>
<comment type="pathway">
    <text evidence="1">Amino-acid biosynthesis; L-valine biosynthesis; L-valine from pyruvate: step 3/4.</text>
</comment>
<comment type="subunit">
    <text evidence="1">Homodimer.</text>
</comment>
<comment type="similarity">
    <text evidence="1">Belongs to the IlvD/Edd family.</text>
</comment>
<proteinExistence type="inferred from homology"/>
<accession>B7UMM8</accession>
<feature type="chain" id="PRO_1000190664" description="Dihydroxy-acid dehydratase">
    <location>
        <begin position="1"/>
        <end position="616"/>
    </location>
</feature>
<feature type="active site" description="Proton acceptor" evidence="1">
    <location>
        <position position="517"/>
    </location>
</feature>
<feature type="binding site" evidence="1">
    <location>
        <position position="81"/>
    </location>
    <ligand>
        <name>Mg(2+)</name>
        <dbReference type="ChEBI" id="CHEBI:18420"/>
    </ligand>
</feature>
<feature type="binding site" evidence="1">
    <location>
        <position position="122"/>
    </location>
    <ligand>
        <name>[2Fe-2S] cluster</name>
        <dbReference type="ChEBI" id="CHEBI:190135"/>
    </ligand>
</feature>
<feature type="binding site" evidence="1">
    <location>
        <position position="123"/>
    </location>
    <ligand>
        <name>Mg(2+)</name>
        <dbReference type="ChEBI" id="CHEBI:18420"/>
    </ligand>
</feature>
<feature type="binding site" description="via carbamate group" evidence="1">
    <location>
        <position position="124"/>
    </location>
    <ligand>
        <name>Mg(2+)</name>
        <dbReference type="ChEBI" id="CHEBI:18420"/>
    </ligand>
</feature>
<feature type="binding site" evidence="1">
    <location>
        <position position="195"/>
    </location>
    <ligand>
        <name>[2Fe-2S] cluster</name>
        <dbReference type="ChEBI" id="CHEBI:190135"/>
    </ligand>
</feature>
<feature type="binding site" evidence="1">
    <location>
        <position position="491"/>
    </location>
    <ligand>
        <name>Mg(2+)</name>
        <dbReference type="ChEBI" id="CHEBI:18420"/>
    </ligand>
</feature>
<feature type="modified residue" description="N6-carboxylysine" evidence="1">
    <location>
        <position position="124"/>
    </location>
</feature>
<organism>
    <name type="scientific">Escherichia coli O127:H6 (strain E2348/69 / EPEC)</name>
    <dbReference type="NCBI Taxonomy" id="574521"/>
    <lineage>
        <taxon>Bacteria</taxon>
        <taxon>Pseudomonadati</taxon>
        <taxon>Pseudomonadota</taxon>
        <taxon>Gammaproteobacteria</taxon>
        <taxon>Enterobacterales</taxon>
        <taxon>Enterobacteriaceae</taxon>
        <taxon>Escherichia</taxon>
    </lineage>
</organism>
<keyword id="KW-0001">2Fe-2S</keyword>
<keyword id="KW-0028">Amino-acid biosynthesis</keyword>
<keyword id="KW-0100">Branched-chain amino acid biosynthesis</keyword>
<keyword id="KW-0408">Iron</keyword>
<keyword id="KW-0411">Iron-sulfur</keyword>
<keyword id="KW-0456">Lyase</keyword>
<keyword id="KW-0460">Magnesium</keyword>
<keyword id="KW-0479">Metal-binding</keyword>
<keyword id="KW-1185">Reference proteome</keyword>
<evidence type="ECO:0000255" key="1">
    <source>
        <dbReference type="HAMAP-Rule" id="MF_00012"/>
    </source>
</evidence>
<gene>
    <name evidence="1" type="primary">ilvD</name>
    <name type="ordered locus">E2348C_4073</name>
</gene>
<dbReference type="EC" id="4.2.1.9" evidence="1"/>
<dbReference type="EMBL" id="FM180568">
    <property type="protein sequence ID" value="CAS11621.1"/>
    <property type="molecule type" value="Genomic_DNA"/>
</dbReference>
<dbReference type="RefSeq" id="WP_001127365.1">
    <property type="nucleotide sequence ID" value="NC_011601.1"/>
</dbReference>
<dbReference type="SMR" id="B7UMM8"/>
<dbReference type="KEGG" id="ecg:E2348C_4073"/>
<dbReference type="HOGENOM" id="CLU_014271_4_2_6"/>
<dbReference type="UniPathway" id="UPA00047">
    <property type="reaction ID" value="UER00057"/>
</dbReference>
<dbReference type="UniPathway" id="UPA00049">
    <property type="reaction ID" value="UER00061"/>
</dbReference>
<dbReference type="Proteomes" id="UP000008205">
    <property type="component" value="Chromosome"/>
</dbReference>
<dbReference type="GO" id="GO:0005829">
    <property type="term" value="C:cytosol"/>
    <property type="evidence" value="ECO:0007669"/>
    <property type="project" value="TreeGrafter"/>
</dbReference>
<dbReference type="GO" id="GO:0051537">
    <property type="term" value="F:2 iron, 2 sulfur cluster binding"/>
    <property type="evidence" value="ECO:0007669"/>
    <property type="project" value="UniProtKB-UniRule"/>
</dbReference>
<dbReference type="GO" id="GO:0004160">
    <property type="term" value="F:dihydroxy-acid dehydratase activity"/>
    <property type="evidence" value="ECO:0007669"/>
    <property type="project" value="UniProtKB-UniRule"/>
</dbReference>
<dbReference type="GO" id="GO:0000287">
    <property type="term" value="F:magnesium ion binding"/>
    <property type="evidence" value="ECO:0007669"/>
    <property type="project" value="UniProtKB-UniRule"/>
</dbReference>
<dbReference type="GO" id="GO:0009097">
    <property type="term" value="P:isoleucine biosynthetic process"/>
    <property type="evidence" value="ECO:0007669"/>
    <property type="project" value="UniProtKB-UniRule"/>
</dbReference>
<dbReference type="GO" id="GO:0009099">
    <property type="term" value="P:L-valine biosynthetic process"/>
    <property type="evidence" value="ECO:0007669"/>
    <property type="project" value="UniProtKB-UniRule"/>
</dbReference>
<dbReference type="FunFam" id="3.50.30.80:FF:000001">
    <property type="entry name" value="Dihydroxy-acid dehydratase"/>
    <property type="match status" value="1"/>
</dbReference>
<dbReference type="Gene3D" id="3.50.30.80">
    <property type="entry name" value="IlvD/EDD C-terminal domain-like"/>
    <property type="match status" value="1"/>
</dbReference>
<dbReference type="HAMAP" id="MF_00012">
    <property type="entry name" value="IlvD"/>
    <property type="match status" value="1"/>
</dbReference>
<dbReference type="InterPro" id="IPR042096">
    <property type="entry name" value="Dihydro-acid_dehy_C"/>
</dbReference>
<dbReference type="InterPro" id="IPR004404">
    <property type="entry name" value="DihydroxyA_deHydtase"/>
</dbReference>
<dbReference type="InterPro" id="IPR020558">
    <property type="entry name" value="DiOHA_6PGluconate_deHydtase_CS"/>
</dbReference>
<dbReference type="InterPro" id="IPR056740">
    <property type="entry name" value="ILV_EDD_C"/>
</dbReference>
<dbReference type="InterPro" id="IPR000581">
    <property type="entry name" value="ILV_EDD_N"/>
</dbReference>
<dbReference type="InterPro" id="IPR037237">
    <property type="entry name" value="IlvD/EDD_N"/>
</dbReference>
<dbReference type="NCBIfam" id="TIGR00110">
    <property type="entry name" value="ilvD"/>
    <property type="match status" value="1"/>
</dbReference>
<dbReference type="NCBIfam" id="NF009103">
    <property type="entry name" value="PRK12448.1"/>
    <property type="match status" value="1"/>
</dbReference>
<dbReference type="PANTHER" id="PTHR43661">
    <property type="entry name" value="D-XYLONATE DEHYDRATASE"/>
    <property type="match status" value="1"/>
</dbReference>
<dbReference type="PANTHER" id="PTHR43661:SF3">
    <property type="entry name" value="D-XYLONATE DEHYDRATASE YAGF-RELATED"/>
    <property type="match status" value="1"/>
</dbReference>
<dbReference type="Pfam" id="PF24877">
    <property type="entry name" value="ILV_EDD_C"/>
    <property type="match status" value="1"/>
</dbReference>
<dbReference type="Pfam" id="PF00920">
    <property type="entry name" value="ILVD_EDD_N"/>
    <property type="match status" value="1"/>
</dbReference>
<dbReference type="SUPFAM" id="SSF143975">
    <property type="entry name" value="IlvD/EDD N-terminal domain-like"/>
    <property type="match status" value="1"/>
</dbReference>
<dbReference type="SUPFAM" id="SSF52016">
    <property type="entry name" value="LeuD/IlvD-like"/>
    <property type="match status" value="1"/>
</dbReference>
<dbReference type="PROSITE" id="PS00886">
    <property type="entry name" value="ILVD_EDD_1"/>
    <property type="match status" value="1"/>
</dbReference>
<dbReference type="PROSITE" id="PS00887">
    <property type="entry name" value="ILVD_EDD_2"/>
    <property type="match status" value="1"/>
</dbReference>
<protein>
    <recommendedName>
        <fullName evidence="1">Dihydroxy-acid dehydratase</fullName>
        <shortName evidence="1">DAD</shortName>
        <ecNumber evidence="1">4.2.1.9</ecNumber>
    </recommendedName>
</protein>
<name>ILVD_ECO27</name>
<reference key="1">
    <citation type="journal article" date="2009" name="J. Bacteriol.">
        <title>Complete genome sequence and comparative genome analysis of enteropathogenic Escherichia coli O127:H6 strain E2348/69.</title>
        <authorList>
            <person name="Iguchi A."/>
            <person name="Thomson N.R."/>
            <person name="Ogura Y."/>
            <person name="Saunders D."/>
            <person name="Ooka T."/>
            <person name="Henderson I.R."/>
            <person name="Harris D."/>
            <person name="Asadulghani M."/>
            <person name="Kurokawa K."/>
            <person name="Dean P."/>
            <person name="Kenny B."/>
            <person name="Quail M.A."/>
            <person name="Thurston S."/>
            <person name="Dougan G."/>
            <person name="Hayashi T."/>
            <person name="Parkhill J."/>
            <person name="Frankel G."/>
        </authorList>
    </citation>
    <scope>NUCLEOTIDE SEQUENCE [LARGE SCALE GENOMIC DNA]</scope>
    <source>
        <strain>E2348/69 / EPEC</strain>
    </source>
</reference>
<sequence length="616" mass="65501">MPKYRSATTTHGRNMAGARALWRATGMTDADFGKPIIAVVNSFTQFVPGHVHLRDLGKLVAEQIEAAGGVAKEFNTIAVDDGIAMGHGGMLYSLPSRELIADSVEYMVNAHCADAMVCISNCDKITPGMLMASLRLNIPVIFVSGGPMEAGKTKLSDQIIKLDLVDAMIQGADPKVSDSQSAQVERSACPTCGSCSGMFTANSMNCLTEALGLSQPGNGSLLATHADRKQLFLNAGKRIVELTKRYYEQDDESALPRNIASKAAFENAMTLDIAMGGSTNTVLHLLAAAQEAEIDFTMSDIDKLSRKVPQLCKVAPSTQKYHMEDVHRAGGVIGILGELDRAGLLNRDVKNVLGLTLPQTLEQYDIIVTQDDAVKNMFRAGPAGIRTTQAFSQDCRWDTLDDDRSNGCIRSLEHAYSKDGGLAVLYGNFAENGCIVKTAGVDDSILKFTGPAKVYESQDDAVEAILGGKVVAGDVVVIRYEGPKGGPGMQEMLYPTSFLKSMGLGKACALITDGRFSGGTSGLSIGHVSPEAASGGSIGLIEDGDLIAIDIPNRGIQLQVSDAELAARREAQEARGDKAWTPKNRERQVSFALRAYASLATSADKGAVRDKSKLGG</sequence>